<gene>
    <name evidence="1" type="primary">pncB</name>
    <name type="ordered locus">PMI0767</name>
</gene>
<protein>
    <recommendedName>
        <fullName evidence="1">Nicotinate phosphoribosyltransferase</fullName>
        <shortName evidence="1">NAPRTase</shortName>
        <ecNumber evidence="1">6.3.4.21</ecNumber>
    </recommendedName>
</protein>
<name>PNCB_PROMH</name>
<proteinExistence type="inferred from homology"/>
<comment type="function">
    <text evidence="1">Catalyzes the synthesis of beta-nicotinate D-ribonucleotide from nicotinate and 5-phospho-D-ribose 1-phosphate at the expense of ATP.</text>
</comment>
<comment type="catalytic activity">
    <reaction evidence="1">
        <text>nicotinate + 5-phospho-alpha-D-ribose 1-diphosphate + ATP + H2O = nicotinate beta-D-ribonucleotide + ADP + phosphate + diphosphate</text>
        <dbReference type="Rhea" id="RHEA:36163"/>
        <dbReference type="ChEBI" id="CHEBI:15377"/>
        <dbReference type="ChEBI" id="CHEBI:30616"/>
        <dbReference type="ChEBI" id="CHEBI:32544"/>
        <dbReference type="ChEBI" id="CHEBI:33019"/>
        <dbReference type="ChEBI" id="CHEBI:43474"/>
        <dbReference type="ChEBI" id="CHEBI:57502"/>
        <dbReference type="ChEBI" id="CHEBI:58017"/>
        <dbReference type="ChEBI" id="CHEBI:456216"/>
        <dbReference type="EC" id="6.3.4.21"/>
    </reaction>
</comment>
<comment type="pathway">
    <text evidence="1">Cofactor biosynthesis; NAD(+) biosynthesis; nicotinate D-ribonucleotide from nicotinate: step 1/1.</text>
</comment>
<comment type="PTM">
    <text evidence="1">Transiently phosphorylated on a His residue during the reaction cycle. Phosphorylation strongly increases the affinity for substrates and increases the rate of nicotinate D-ribonucleotide production. Dephosphorylation regenerates the low-affinity form of the enzyme, leading to product release.</text>
</comment>
<comment type="similarity">
    <text evidence="1">Belongs to the NAPRTase family.</text>
</comment>
<feature type="chain" id="PRO_1000129477" description="Nicotinate phosphoribosyltransferase">
    <location>
        <begin position="1"/>
        <end position="404"/>
    </location>
</feature>
<feature type="modified residue" description="Phosphohistidine; by autocatalysis" evidence="1">
    <location>
        <position position="224"/>
    </location>
</feature>
<evidence type="ECO:0000255" key="1">
    <source>
        <dbReference type="HAMAP-Rule" id="MF_00570"/>
    </source>
</evidence>
<accession>B4EVC0</accession>
<organism>
    <name type="scientific">Proteus mirabilis (strain HI4320)</name>
    <dbReference type="NCBI Taxonomy" id="529507"/>
    <lineage>
        <taxon>Bacteria</taxon>
        <taxon>Pseudomonadati</taxon>
        <taxon>Pseudomonadota</taxon>
        <taxon>Gammaproteobacteria</taxon>
        <taxon>Enterobacterales</taxon>
        <taxon>Morganellaceae</taxon>
        <taxon>Proteus</taxon>
    </lineage>
</organism>
<reference key="1">
    <citation type="journal article" date="2008" name="J. Bacteriol.">
        <title>Complete genome sequence of uropathogenic Proteus mirabilis, a master of both adherence and motility.</title>
        <authorList>
            <person name="Pearson M.M."/>
            <person name="Sebaihia M."/>
            <person name="Churcher C."/>
            <person name="Quail M.A."/>
            <person name="Seshasayee A.S."/>
            <person name="Luscombe N.M."/>
            <person name="Abdellah Z."/>
            <person name="Arrosmith C."/>
            <person name="Atkin B."/>
            <person name="Chillingworth T."/>
            <person name="Hauser H."/>
            <person name="Jagels K."/>
            <person name="Moule S."/>
            <person name="Mungall K."/>
            <person name="Norbertczak H."/>
            <person name="Rabbinowitsch E."/>
            <person name="Walker D."/>
            <person name="Whithead S."/>
            <person name="Thomson N.R."/>
            <person name="Rather P.N."/>
            <person name="Parkhill J."/>
            <person name="Mobley H.L.T."/>
        </authorList>
    </citation>
    <scope>NUCLEOTIDE SEQUENCE [LARGE SCALE GENOMIC DNA]</scope>
    <source>
        <strain>HI4320</strain>
    </source>
</reference>
<keyword id="KW-0436">Ligase</keyword>
<keyword id="KW-0597">Phosphoprotein</keyword>
<keyword id="KW-0662">Pyridine nucleotide biosynthesis</keyword>
<keyword id="KW-1185">Reference proteome</keyword>
<sequence length="404" mass="46666">MILDATPIITSLLDTDAYKLHMQQAVYHHYSDIPVVAEFRCRSDERLGEYATTLRHQVDMMADLSLTNEEFGYLQSLPFFKNDYLQWFKHFRFKPEQVHIATTADNQLTIKITGPWREVILWEVPLLALVSEIVHRARSPQITADDAVIQLRKLIDIFYRDAAEQQIDLADFKLMDFGTRRRFSYDVQRAIVDELKNHFPYLIGTSNYHFAERMQLAPVGTQAHEWFQAHQQISPELANSQRAALQSWLDEYPDQLGIALTDCITMDAFLRDFDMPFASRYQGLRHDSGDPIEWGEKAIAHYEKLGIDPMSKVLVFSDSLDFQKALVLYKHFHKRIRLIFGIGTRLTCNIPNITPLNIVIKLVECNGKPVAKLSDSPGKTICEDDEFVDKLRKAFDVPLVRQAC</sequence>
<dbReference type="EC" id="6.3.4.21" evidence="1"/>
<dbReference type="EMBL" id="AM942759">
    <property type="protein sequence ID" value="CAR41763.1"/>
    <property type="molecule type" value="Genomic_DNA"/>
</dbReference>
<dbReference type="RefSeq" id="WP_004244666.1">
    <property type="nucleotide sequence ID" value="NC_010554.1"/>
</dbReference>
<dbReference type="SMR" id="B4EVC0"/>
<dbReference type="EnsemblBacteria" id="CAR41763">
    <property type="protein sequence ID" value="CAR41763"/>
    <property type="gene ID" value="PMI0767"/>
</dbReference>
<dbReference type="GeneID" id="6800791"/>
<dbReference type="KEGG" id="pmr:PMI0767"/>
<dbReference type="eggNOG" id="COG1488">
    <property type="taxonomic scope" value="Bacteria"/>
</dbReference>
<dbReference type="HOGENOM" id="CLU_030991_1_0_6"/>
<dbReference type="UniPathway" id="UPA00253">
    <property type="reaction ID" value="UER00457"/>
</dbReference>
<dbReference type="Proteomes" id="UP000008319">
    <property type="component" value="Chromosome"/>
</dbReference>
<dbReference type="GO" id="GO:0005829">
    <property type="term" value="C:cytosol"/>
    <property type="evidence" value="ECO:0007669"/>
    <property type="project" value="TreeGrafter"/>
</dbReference>
<dbReference type="GO" id="GO:0004516">
    <property type="term" value="F:nicotinate phosphoribosyltransferase activity"/>
    <property type="evidence" value="ECO:0007669"/>
    <property type="project" value="UniProtKB-UniRule"/>
</dbReference>
<dbReference type="GO" id="GO:0034355">
    <property type="term" value="P:NAD biosynthetic process via the salvage pathway"/>
    <property type="evidence" value="ECO:0007669"/>
    <property type="project" value="TreeGrafter"/>
</dbReference>
<dbReference type="CDD" id="cd01401">
    <property type="entry name" value="PncB_like"/>
    <property type="match status" value="1"/>
</dbReference>
<dbReference type="FunFam" id="3.20.140.10:FF:000001">
    <property type="entry name" value="Nicotinate phosphoribosyltransferase"/>
    <property type="match status" value="1"/>
</dbReference>
<dbReference type="Gene3D" id="3.20.140.10">
    <property type="entry name" value="nicotinate phosphoribosyltransferase"/>
    <property type="match status" value="1"/>
</dbReference>
<dbReference type="HAMAP" id="MF_00570">
    <property type="entry name" value="NAPRTase"/>
    <property type="match status" value="1"/>
</dbReference>
<dbReference type="InterPro" id="IPR041525">
    <property type="entry name" value="N/Namide_PRibTrfase"/>
</dbReference>
<dbReference type="InterPro" id="IPR040727">
    <property type="entry name" value="NAPRTase_N"/>
</dbReference>
<dbReference type="InterPro" id="IPR006406">
    <property type="entry name" value="Nic_PRibTrfase"/>
</dbReference>
<dbReference type="InterPro" id="IPR007229">
    <property type="entry name" value="Nic_PRibTrfase-Fam"/>
</dbReference>
<dbReference type="InterPro" id="IPR036068">
    <property type="entry name" value="Nicotinate_pribotase-like_C"/>
</dbReference>
<dbReference type="NCBIfam" id="TIGR01514">
    <property type="entry name" value="NAPRTase"/>
    <property type="match status" value="1"/>
</dbReference>
<dbReference type="NCBIfam" id="NF003704">
    <property type="entry name" value="PRK05321.1"/>
    <property type="match status" value="1"/>
</dbReference>
<dbReference type="PANTHER" id="PTHR11098">
    <property type="entry name" value="NICOTINATE PHOSPHORIBOSYLTRANSFERASE"/>
    <property type="match status" value="1"/>
</dbReference>
<dbReference type="PANTHER" id="PTHR11098:SF1">
    <property type="entry name" value="NICOTINATE PHOSPHORIBOSYLTRANSFERASE"/>
    <property type="match status" value="1"/>
</dbReference>
<dbReference type="Pfam" id="PF04095">
    <property type="entry name" value="NAPRTase"/>
    <property type="match status" value="1"/>
</dbReference>
<dbReference type="Pfam" id="PF17767">
    <property type="entry name" value="NAPRTase_N"/>
    <property type="match status" value="1"/>
</dbReference>
<dbReference type="PIRSF" id="PIRSF000484">
    <property type="entry name" value="NAPRT"/>
    <property type="match status" value="1"/>
</dbReference>
<dbReference type="SUPFAM" id="SSF51690">
    <property type="entry name" value="Nicotinate/Quinolinate PRTase C-terminal domain-like"/>
    <property type="match status" value="1"/>
</dbReference>
<dbReference type="SUPFAM" id="SSF54675">
    <property type="entry name" value="Nicotinate/Quinolinate PRTase N-terminal domain-like"/>
    <property type="match status" value="1"/>
</dbReference>